<sequence length="447" mass="48726">MHHRKYFGTDGIRGKVGDMPITPDFFLKLGWAAGKILARQDSRKIIIGKDTRISGYMLESALEAGLAAAGFSALLTGPMPTPAIAYLTRTFRAEAGIVISASHNPFYDNGIKFFDINGSKLSDSLEEAIEAQLEKPLTCVESAQLGKARRIVDAAGRYIEFCKGTFPSEFNLKNFKIVVDCSNGATYHIAPSVLKELGATVISIACEPNGLNINKECGATNIGMLQKSVLAEQADLGIALDGDGDRLIMVDHLGNKVDGDQIVYLIAKEACRQQQLKGGVVGTLMSNMGLELALQRLKIPFIRAKVGDRYVLEKMQKHGYRIGAENSGHIILLDKTTTGDGMIAALQVFKVIIQNQMTLHELCSEIKLLPQVLVNFSFSGNKNVLQSDAIASLVKKVESTLAGRGRILLRTSGTEPVIRVMIEADQEEHFIKTLAEEVAEKIKKSLY</sequence>
<comment type="function">
    <text evidence="1">Catalyzes the conversion of glucosamine-6-phosphate to glucosamine-1-phosphate.</text>
</comment>
<comment type="catalytic activity">
    <reaction evidence="1">
        <text>alpha-D-glucosamine 1-phosphate = D-glucosamine 6-phosphate</text>
        <dbReference type="Rhea" id="RHEA:23424"/>
        <dbReference type="ChEBI" id="CHEBI:58516"/>
        <dbReference type="ChEBI" id="CHEBI:58725"/>
        <dbReference type="EC" id="5.4.2.10"/>
    </reaction>
</comment>
<comment type="cofactor">
    <cofactor evidence="1">
        <name>Mg(2+)</name>
        <dbReference type="ChEBI" id="CHEBI:18420"/>
    </cofactor>
    <text evidence="1">Binds 1 Mg(2+) ion per subunit.</text>
</comment>
<comment type="PTM">
    <text evidence="1">Activated by phosphorylation.</text>
</comment>
<comment type="similarity">
    <text evidence="1">Belongs to the phosphohexose mutase family.</text>
</comment>
<feature type="chain" id="PRO_1000215493" description="Phosphoglucosamine mutase">
    <location>
        <begin position="1"/>
        <end position="447"/>
    </location>
</feature>
<feature type="active site" description="Phosphoserine intermediate" evidence="1">
    <location>
        <position position="102"/>
    </location>
</feature>
<feature type="binding site" description="via phosphate group" evidence="1">
    <location>
        <position position="102"/>
    </location>
    <ligand>
        <name>Mg(2+)</name>
        <dbReference type="ChEBI" id="CHEBI:18420"/>
    </ligand>
</feature>
<feature type="binding site" evidence="1">
    <location>
        <position position="241"/>
    </location>
    <ligand>
        <name>Mg(2+)</name>
        <dbReference type="ChEBI" id="CHEBI:18420"/>
    </ligand>
</feature>
<feature type="binding site" evidence="1">
    <location>
        <position position="243"/>
    </location>
    <ligand>
        <name>Mg(2+)</name>
        <dbReference type="ChEBI" id="CHEBI:18420"/>
    </ligand>
</feature>
<feature type="binding site" evidence="1">
    <location>
        <position position="245"/>
    </location>
    <ligand>
        <name>Mg(2+)</name>
        <dbReference type="ChEBI" id="CHEBI:18420"/>
    </ligand>
</feature>
<feature type="modified residue" description="Phosphoserine" evidence="1">
    <location>
        <position position="102"/>
    </location>
</feature>
<reference key="1">
    <citation type="journal article" date="2009" name="Proc. Natl. Acad. Sci. U.S.A.">
        <title>Hamiltonella defensa, genome evolution of protective bacterial endosymbiont from pathogenic ancestors.</title>
        <authorList>
            <person name="Degnan P.H."/>
            <person name="Yu Y."/>
            <person name="Sisneros N."/>
            <person name="Wing R.A."/>
            <person name="Moran N.A."/>
        </authorList>
    </citation>
    <scope>NUCLEOTIDE SEQUENCE [LARGE SCALE GENOMIC DNA]</scope>
    <source>
        <strain>5AT</strain>
    </source>
</reference>
<gene>
    <name evidence="1" type="primary">glmM</name>
    <name type="ordered locus">HDEF_1962</name>
</gene>
<protein>
    <recommendedName>
        <fullName evidence="1">Phosphoglucosamine mutase</fullName>
        <ecNumber evidence="1">5.4.2.10</ecNumber>
    </recommendedName>
</protein>
<dbReference type="EC" id="5.4.2.10" evidence="1"/>
<dbReference type="EMBL" id="CP001277">
    <property type="protein sequence ID" value="ACQ68548.1"/>
    <property type="molecule type" value="Genomic_DNA"/>
</dbReference>
<dbReference type="RefSeq" id="WP_015874307.1">
    <property type="nucleotide sequence ID" value="NC_012751.1"/>
</dbReference>
<dbReference type="SMR" id="C4K7K5"/>
<dbReference type="STRING" id="572265.HDEF_1962"/>
<dbReference type="GeneID" id="66261532"/>
<dbReference type="KEGG" id="hde:HDEF_1962"/>
<dbReference type="eggNOG" id="COG1109">
    <property type="taxonomic scope" value="Bacteria"/>
</dbReference>
<dbReference type="HOGENOM" id="CLU_016950_7_0_6"/>
<dbReference type="Proteomes" id="UP000002334">
    <property type="component" value="Chromosome"/>
</dbReference>
<dbReference type="GO" id="GO:0005829">
    <property type="term" value="C:cytosol"/>
    <property type="evidence" value="ECO:0007669"/>
    <property type="project" value="TreeGrafter"/>
</dbReference>
<dbReference type="GO" id="GO:0000287">
    <property type="term" value="F:magnesium ion binding"/>
    <property type="evidence" value="ECO:0007669"/>
    <property type="project" value="UniProtKB-UniRule"/>
</dbReference>
<dbReference type="GO" id="GO:0008966">
    <property type="term" value="F:phosphoglucosamine mutase activity"/>
    <property type="evidence" value="ECO:0007669"/>
    <property type="project" value="UniProtKB-UniRule"/>
</dbReference>
<dbReference type="GO" id="GO:0004615">
    <property type="term" value="F:phosphomannomutase activity"/>
    <property type="evidence" value="ECO:0007669"/>
    <property type="project" value="TreeGrafter"/>
</dbReference>
<dbReference type="GO" id="GO:0005975">
    <property type="term" value="P:carbohydrate metabolic process"/>
    <property type="evidence" value="ECO:0007669"/>
    <property type="project" value="InterPro"/>
</dbReference>
<dbReference type="GO" id="GO:0009252">
    <property type="term" value="P:peptidoglycan biosynthetic process"/>
    <property type="evidence" value="ECO:0007669"/>
    <property type="project" value="TreeGrafter"/>
</dbReference>
<dbReference type="GO" id="GO:0006048">
    <property type="term" value="P:UDP-N-acetylglucosamine biosynthetic process"/>
    <property type="evidence" value="ECO:0007669"/>
    <property type="project" value="TreeGrafter"/>
</dbReference>
<dbReference type="CDD" id="cd05802">
    <property type="entry name" value="GlmM"/>
    <property type="match status" value="1"/>
</dbReference>
<dbReference type="FunFam" id="3.30.310.50:FF:000001">
    <property type="entry name" value="Phosphoglucosamine mutase"/>
    <property type="match status" value="1"/>
</dbReference>
<dbReference type="FunFam" id="3.40.120.10:FF:000001">
    <property type="entry name" value="Phosphoglucosamine mutase"/>
    <property type="match status" value="1"/>
</dbReference>
<dbReference type="FunFam" id="3.40.120.10:FF:000002">
    <property type="entry name" value="Phosphoglucosamine mutase"/>
    <property type="match status" value="1"/>
</dbReference>
<dbReference type="Gene3D" id="3.40.120.10">
    <property type="entry name" value="Alpha-D-Glucose-1,6-Bisphosphate, subunit A, domain 3"/>
    <property type="match status" value="3"/>
</dbReference>
<dbReference type="Gene3D" id="3.30.310.50">
    <property type="entry name" value="Alpha-D-phosphohexomutase, C-terminal domain"/>
    <property type="match status" value="1"/>
</dbReference>
<dbReference type="HAMAP" id="MF_01554_B">
    <property type="entry name" value="GlmM_B"/>
    <property type="match status" value="1"/>
</dbReference>
<dbReference type="InterPro" id="IPR005844">
    <property type="entry name" value="A-D-PHexomutase_a/b/a-I"/>
</dbReference>
<dbReference type="InterPro" id="IPR016055">
    <property type="entry name" value="A-D-PHexomutase_a/b/a-I/II/III"/>
</dbReference>
<dbReference type="InterPro" id="IPR005845">
    <property type="entry name" value="A-D-PHexomutase_a/b/a-II"/>
</dbReference>
<dbReference type="InterPro" id="IPR005846">
    <property type="entry name" value="A-D-PHexomutase_a/b/a-III"/>
</dbReference>
<dbReference type="InterPro" id="IPR005843">
    <property type="entry name" value="A-D-PHexomutase_C"/>
</dbReference>
<dbReference type="InterPro" id="IPR036900">
    <property type="entry name" value="A-D-PHexomutase_C_sf"/>
</dbReference>
<dbReference type="InterPro" id="IPR016066">
    <property type="entry name" value="A-D-PHexomutase_CS"/>
</dbReference>
<dbReference type="InterPro" id="IPR005841">
    <property type="entry name" value="Alpha-D-phosphohexomutase_SF"/>
</dbReference>
<dbReference type="InterPro" id="IPR006352">
    <property type="entry name" value="GlmM_bact"/>
</dbReference>
<dbReference type="InterPro" id="IPR050060">
    <property type="entry name" value="Phosphoglucosamine_mutase"/>
</dbReference>
<dbReference type="NCBIfam" id="TIGR01455">
    <property type="entry name" value="glmM"/>
    <property type="match status" value="1"/>
</dbReference>
<dbReference type="NCBIfam" id="NF008139">
    <property type="entry name" value="PRK10887.1"/>
    <property type="match status" value="1"/>
</dbReference>
<dbReference type="PANTHER" id="PTHR42946:SF1">
    <property type="entry name" value="PHOSPHOGLUCOMUTASE (ALPHA-D-GLUCOSE-1,6-BISPHOSPHATE-DEPENDENT)"/>
    <property type="match status" value="1"/>
</dbReference>
<dbReference type="PANTHER" id="PTHR42946">
    <property type="entry name" value="PHOSPHOHEXOSE MUTASE"/>
    <property type="match status" value="1"/>
</dbReference>
<dbReference type="Pfam" id="PF02878">
    <property type="entry name" value="PGM_PMM_I"/>
    <property type="match status" value="1"/>
</dbReference>
<dbReference type="Pfam" id="PF02879">
    <property type="entry name" value="PGM_PMM_II"/>
    <property type="match status" value="1"/>
</dbReference>
<dbReference type="Pfam" id="PF02880">
    <property type="entry name" value="PGM_PMM_III"/>
    <property type="match status" value="1"/>
</dbReference>
<dbReference type="Pfam" id="PF00408">
    <property type="entry name" value="PGM_PMM_IV"/>
    <property type="match status" value="1"/>
</dbReference>
<dbReference type="PRINTS" id="PR00509">
    <property type="entry name" value="PGMPMM"/>
</dbReference>
<dbReference type="SUPFAM" id="SSF55957">
    <property type="entry name" value="Phosphoglucomutase, C-terminal domain"/>
    <property type="match status" value="1"/>
</dbReference>
<dbReference type="SUPFAM" id="SSF53738">
    <property type="entry name" value="Phosphoglucomutase, first 3 domains"/>
    <property type="match status" value="3"/>
</dbReference>
<dbReference type="PROSITE" id="PS00710">
    <property type="entry name" value="PGM_PMM"/>
    <property type="match status" value="1"/>
</dbReference>
<evidence type="ECO:0000255" key="1">
    <source>
        <dbReference type="HAMAP-Rule" id="MF_01554"/>
    </source>
</evidence>
<proteinExistence type="inferred from homology"/>
<name>GLMM_HAMD5</name>
<organism>
    <name type="scientific">Hamiltonella defensa subsp. Acyrthosiphon pisum (strain 5AT)</name>
    <dbReference type="NCBI Taxonomy" id="572265"/>
    <lineage>
        <taxon>Bacteria</taxon>
        <taxon>Pseudomonadati</taxon>
        <taxon>Pseudomonadota</taxon>
        <taxon>Gammaproteobacteria</taxon>
        <taxon>Enterobacterales</taxon>
        <taxon>Enterobacteriaceae</taxon>
        <taxon>aphid secondary symbionts</taxon>
        <taxon>Candidatus Hamiltonella</taxon>
    </lineage>
</organism>
<accession>C4K7K5</accession>
<keyword id="KW-0413">Isomerase</keyword>
<keyword id="KW-0460">Magnesium</keyword>
<keyword id="KW-0479">Metal-binding</keyword>
<keyword id="KW-0597">Phosphoprotein</keyword>